<dbReference type="EC" id="3.1.3.-" evidence="6"/>
<dbReference type="EC" id="3.1.3.8" evidence="6"/>
<dbReference type="EMBL" id="U59804">
    <property type="protein sequence ID" value="AAB96872.1"/>
    <property type="molecule type" value="Genomic_DNA"/>
</dbReference>
<dbReference type="EMBL" id="AAHF01000005">
    <property type="protein sequence ID" value="EAL89926.2"/>
    <property type="status" value="ALT_INIT"/>
    <property type="molecule type" value="Genomic_DNA"/>
</dbReference>
<dbReference type="EMBL" id="AJ419776">
    <property type="protein sequence ID" value="CAD12029.1"/>
    <property type="molecule type" value="Genomic_DNA"/>
</dbReference>
<dbReference type="RefSeq" id="XP_751964.2">
    <property type="nucleotide sequence ID" value="XM_746871.2"/>
</dbReference>
<dbReference type="PDB" id="1QWO">
    <property type="method" value="X-ray"/>
    <property type="resolution" value="1.50 A"/>
    <property type="chains" value="A=24-465"/>
</dbReference>
<dbReference type="PDB" id="1SK8">
    <property type="method" value="X-ray"/>
    <property type="resolution" value="1.65 A"/>
    <property type="chains" value="A=27-464"/>
</dbReference>
<dbReference type="PDB" id="1SK9">
    <property type="method" value="X-ray"/>
    <property type="resolution" value="1.64 A"/>
    <property type="chains" value="A=27-464"/>
</dbReference>
<dbReference type="PDB" id="1SKA">
    <property type="method" value="X-ray"/>
    <property type="resolution" value="1.69 A"/>
    <property type="chains" value="A=27-464"/>
</dbReference>
<dbReference type="PDB" id="1SKB">
    <property type="method" value="X-ray"/>
    <property type="resolution" value="1.58 A"/>
    <property type="chains" value="A=27-464"/>
</dbReference>
<dbReference type="PDBsum" id="1QWO"/>
<dbReference type="PDBsum" id="1SK8"/>
<dbReference type="PDBsum" id="1SK9"/>
<dbReference type="PDBsum" id="1SKA"/>
<dbReference type="PDBsum" id="1SKB"/>
<dbReference type="SMR" id="O00092"/>
<dbReference type="STRING" id="330879.O00092"/>
<dbReference type="GlyCosmos" id="O00092">
    <property type="glycosylation" value="7 sites, No reported glycans"/>
</dbReference>
<dbReference type="iPTMnet" id="O00092"/>
<dbReference type="GeneID" id="3509324"/>
<dbReference type="KEGG" id="afm:AFUA_4G08630"/>
<dbReference type="eggNOG" id="KOG1382">
    <property type="taxonomic scope" value="Eukaryota"/>
</dbReference>
<dbReference type="HOGENOM" id="CLU_020880_0_0_1"/>
<dbReference type="InParanoid" id="O00092"/>
<dbReference type="OrthoDB" id="6509975at2759"/>
<dbReference type="BRENDA" id="3.1.3.26">
    <property type="organism ID" value="508"/>
</dbReference>
<dbReference type="BRENDA" id="3.1.3.8">
    <property type="organism ID" value="508"/>
</dbReference>
<dbReference type="EvolutionaryTrace" id="O00092"/>
<dbReference type="Proteomes" id="UP000002530">
    <property type="component" value="Chromosome 4"/>
</dbReference>
<dbReference type="GO" id="GO:0005576">
    <property type="term" value="C:extracellular region"/>
    <property type="evidence" value="ECO:0007669"/>
    <property type="project" value="UniProtKB-SubCell"/>
</dbReference>
<dbReference type="GO" id="GO:0016158">
    <property type="term" value="F:3-phytase activity"/>
    <property type="evidence" value="ECO:0007669"/>
    <property type="project" value="UniProtKB-EC"/>
</dbReference>
<dbReference type="GO" id="GO:0003993">
    <property type="term" value="F:acid phosphatase activity"/>
    <property type="evidence" value="ECO:0000318"/>
    <property type="project" value="GO_Central"/>
</dbReference>
<dbReference type="CDD" id="cd07061">
    <property type="entry name" value="HP_HAP_like"/>
    <property type="match status" value="1"/>
</dbReference>
<dbReference type="FunFam" id="3.40.50.1240:FF:000027">
    <property type="entry name" value="3-phytase A"/>
    <property type="match status" value="1"/>
</dbReference>
<dbReference type="Gene3D" id="3.40.50.1240">
    <property type="entry name" value="Phosphoglycerate mutase-like"/>
    <property type="match status" value="1"/>
</dbReference>
<dbReference type="InterPro" id="IPR033379">
    <property type="entry name" value="Acid_Pase_AS"/>
</dbReference>
<dbReference type="InterPro" id="IPR000560">
    <property type="entry name" value="His_Pase_clade-2"/>
</dbReference>
<dbReference type="InterPro" id="IPR029033">
    <property type="entry name" value="His_PPase_superfam"/>
</dbReference>
<dbReference type="InterPro" id="IPR016274">
    <property type="entry name" value="Histidine_acid_Pase_euk"/>
</dbReference>
<dbReference type="PANTHER" id="PTHR20963:SF24">
    <property type="entry name" value="3-PHYTASE B"/>
    <property type="match status" value="1"/>
</dbReference>
<dbReference type="PANTHER" id="PTHR20963">
    <property type="entry name" value="MULTIPLE INOSITOL POLYPHOSPHATE PHOSPHATASE-RELATED"/>
    <property type="match status" value="1"/>
</dbReference>
<dbReference type="Pfam" id="PF00328">
    <property type="entry name" value="His_Phos_2"/>
    <property type="match status" value="1"/>
</dbReference>
<dbReference type="PIRSF" id="PIRSF000894">
    <property type="entry name" value="Acid_phosphatase"/>
    <property type="match status" value="1"/>
</dbReference>
<dbReference type="SUPFAM" id="SSF53254">
    <property type="entry name" value="Phosphoglycerate mutase-like"/>
    <property type="match status" value="1"/>
</dbReference>
<dbReference type="PROSITE" id="PS00616">
    <property type="entry name" value="HIS_ACID_PHOSPHAT_1"/>
    <property type="match status" value="1"/>
</dbReference>
<dbReference type="PROSITE" id="PS00778">
    <property type="entry name" value="HIS_ACID_PHOSPHAT_2"/>
    <property type="match status" value="1"/>
</dbReference>
<reference key="1">
    <citation type="journal article" date="1997" name="Appl. Environ. Microbiol.">
        <title>Gene cloning, purification, and characterization of a heat-stable phytase from the fungus Aspergillus fumigatus.</title>
        <authorList>
            <person name="Pasamontes L."/>
            <person name="Haiker M."/>
            <person name="Wyss M."/>
            <person name="Tessier M."/>
            <person name="van Loon A.P.G.M."/>
        </authorList>
    </citation>
    <scope>NUCLEOTIDE SEQUENCE [GENOMIC DNA]</scope>
    <scope>PROTEIN SEQUENCE OF 27-37</scope>
    <scope>FUNCTION</scope>
    <scope>CATALYTIC ACTIVITY</scope>
    <scope>BIOPHYSICOCHEMICAL PROPERTIES</scope>
    <source>
        <strain>ATCC 34625 / CS-270</strain>
    </source>
</reference>
<reference key="2">
    <citation type="journal article" date="2005" name="Nature">
        <title>Genomic sequence of the pathogenic and allergenic filamentous fungus Aspergillus fumigatus.</title>
        <authorList>
            <person name="Nierman W.C."/>
            <person name="Pain A."/>
            <person name="Anderson M.J."/>
            <person name="Wortman J.R."/>
            <person name="Kim H.S."/>
            <person name="Arroyo J."/>
            <person name="Berriman M."/>
            <person name="Abe K."/>
            <person name="Archer D.B."/>
            <person name="Bermejo C."/>
            <person name="Bennett J.W."/>
            <person name="Bowyer P."/>
            <person name="Chen D."/>
            <person name="Collins M."/>
            <person name="Coulsen R."/>
            <person name="Davies R."/>
            <person name="Dyer P.S."/>
            <person name="Farman M.L."/>
            <person name="Fedorova N."/>
            <person name="Fedorova N.D."/>
            <person name="Feldblyum T.V."/>
            <person name="Fischer R."/>
            <person name="Fosker N."/>
            <person name="Fraser A."/>
            <person name="Garcia J.L."/>
            <person name="Garcia M.J."/>
            <person name="Goble A."/>
            <person name="Goldman G.H."/>
            <person name="Gomi K."/>
            <person name="Griffith-Jones S."/>
            <person name="Gwilliam R."/>
            <person name="Haas B.J."/>
            <person name="Haas H."/>
            <person name="Harris D.E."/>
            <person name="Horiuchi H."/>
            <person name="Huang J."/>
            <person name="Humphray S."/>
            <person name="Jimenez J."/>
            <person name="Keller N."/>
            <person name="Khouri H."/>
            <person name="Kitamoto K."/>
            <person name="Kobayashi T."/>
            <person name="Konzack S."/>
            <person name="Kulkarni R."/>
            <person name="Kumagai T."/>
            <person name="Lafton A."/>
            <person name="Latge J.-P."/>
            <person name="Li W."/>
            <person name="Lord A."/>
            <person name="Lu C."/>
            <person name="Majoros W.H."/>
            <person name="May G.S."/>
            <person name="Miller B.L."/>
            <person name="Mohamoud Y."/>
            <person name="Molina M."/>
            <person name="Monod M."/>
            <person name="Mouyna I."/>
            <person name="Mulligan S."/>
            <person name="Murphy L.D."/>
            <person name="O'Neil S."/>
            <person name="Paulsen I."/>
            <person name="Penalva M.A."/>
            <person name="Pertea M."/>
            <person name="Price C."/>
            <person name="Pritchard B.L."/>
            <person name="Quail M.A."/>
            <person name="Rabbinowitsch E."/>
            <person name="Rawlins N."/>
            <person name="Rajandream M.A."/>
            <person name="Reichard U."/>
            <person name="Renauld H."/>
            <person name="Robson G.D."/>
            <person name="Rodriguez de Cordoba S."/>
            <person name="Rodriguez-Pena J.M."/>
            <person name="Ronning C.M."/>
            <person name="Rutter S."/>
            <person name="Salzberg S.L."/>
            <person name="Sanchez M."/>
            <person name="Sanchez-Ferrero J.C."/>
            <person name="Saunders D."/>
            <person name="Seeger K."/>
            <person name="Squares R."/>
            <person name="Squares S."/>
            <person name="Takeuchi M."/>
            <person name="Tekaia F."/>
            <person name="Turner G."/>
            <person name="Vazquez de Aldana C.R."/>
            <person name="Weidman J."/>
            <person name="White O."/>
            <person name="Woodward J.R."/>
            <person name="Yu J.-H."/>
            <person name="Fraser C.M."/>
            <person name="Galagan J.E."/>
            <person name="Asai K."/>
            <person name="Machida M."/>
            <person name="Hall N."/>
            <person name="Barrell B.G."/>
            <person name="Denning D.W."/>
        </authorList>
    </citation>
    <scope>NUCLEOTIDE SEQUENCE [LARGE SCALE GENOMIC DNA]</scope>
    <source>
        <strain>ATCC MYA-4609 / CBS 101355 / FGSC A1100 / Af293</strain>
    </source>
</reference>
<reference key="3">
    <citation type="submission" date="2001-11" db="EMBL/GenBank/DDBJ databases">
        <title>Cloning of phytase gene from Aspergillus fumigatus and its expression in Pichia pastoris.</title>
        <authorList>
            <person name="Zhang G."/>
        </authorList>
    </citation>
    <scope>NUCLEOTIDE SEQUENCE [GENOMIC DNA] OF 24-465</scope>
    <source>
        <strain>CCTCC AF93024</strain>
    </source>
</reference>
<reference key="4">
    <citation type="journal article" date="1999" name="Appl. Environ. Microbiol.">
        <title>Biochemical characterization of fungal phytases (myo-inositol hexakisphosphate phosphohydrolases): catalytic properties.</title>
        <authorList>
            <person name="Wyss M."/>
            <person name="Brugger R."/>
            <person name="Kronenberger A."/>
            <person name="Remy R."/>
            <person name="Fimbel R."/>
            <person name="Oesterhelt G."/>
            <person name="Lehmann M."/>
            <person name="van Loon A.P.G.M."/>
        </authorList>
    </citation>
    <scope>FUNCTION</scope>
    <scope>CATALYTIC ACTIVITY</scope>
    <scope>BIOPHYSICOCHEMICAL PROPERTIES</scope>
    <scope>BIOTECHNOLOGY</scope>
</reference>
<reference evidence="11" key="5">
    <citation type="journal article" date="2004" name="J. Mol. Biol.">
        <title>Crystal structure of a heat-resilient phytase from Aspergillus fumigatus, carrying a phosphorylated histidine.</title>
        <authorList>
            <person name="Xiang T."/>
            <person name="Liu Q."/>
            <person name="Deacon A.M."/>
            <person name="Koshy M."/>
            <person name="Kriksunov I.A."/>
            <person name="Lei X.G."/>
            <person name="Hao Q."/>
            <person name="Thiel D.J."/>
        </authorList>
    </citation>
    <scope>X-RAY CRYSTALLOGRAPHY (1.50 ANGSTROMS) OF 24-465</scope>
    <scope>ACTIVE SITE</scope>
    <scope>GLYCOSYLATION AT ASN-104; ASN-205; ASN-228; ASN-337; ASN-350 AND ASN-374</scope>
    <scope>DISULFIDE BOND</scope>
</reference>
<reference evidence="12 13 14 15" key="6">
    <citation type="journal article" date="2004" name="Structure">
        <title>Crystallographic snapshots of Aspergillus fumigatus phytase, revealing its enzymatic dynamics.</title>
        <authorList>
            <person name="Liu Q."/>
            <person name="Huang Q."/>
            <person name="Lei X.G."/>
            <person name="Hao Q."/>
        </authorList>
    </citation>
    <scope>X-RAY CRYSTALLOGRAPHY (1.58 ANGSTROMS) OF 27-465 IN COMPLEX WITH PHOSPHATE ION</scope>
    <scope>GLYCOSYLATION AT ASN-104; ASN-205; ASN-228; ASN-337 AND ASN-374</scope>
    <scope>DISULFIDE BOND</scope>
</reference>
<gene>
    <name type="primary">phyA</name>
    <name type="synonym">phyA3</name>
    <name type="ORF">AFUA_4G08630</name>
</gene>
<sequence length="465" mass="50836">MVTLTFLLSAAYLLSGRVSAAPSSAGSKSCDTVDLGYQCSPATSHLWGQYSPFFSLEDELSVSSKLPKDCRITLVQVLSRHGARYPTSSKSKKYKKLVTAIQANATDFKGKFAFLKTYNYTLGADDLTPFGEQQLVNSGIKFYQRYKALARSVVPFIRASGSDRVIASGEKFIEGFQQAKLADPGATNRAAPAISVIIPESETFNNTLDHGVCTKFEASQLGDEVAANFTALFAPDIRARAEKHLPGVTLTDEDVVSLMDMCSFDTVARTSDASQLSPFCQLFTHNEWKKYNYLQSLGKYYGYGAGNPLGPAQGIGFTNELIARLTRSPVQDHTSTNSTLVSNPATFPLNATMYVDFSHDNSMVSIFFALGLYNGTEPLSRTSVESAKELDGYSASWVVPFGARAYFETMQCKSEKEPLVRALINDRVVPLHGCDVDKLGRCKLNDFVKGLSWARSGGNWGECFS</sequence>
<proteinExistence type="evidence at protein level"/>
<feature type="signal peptide" evidence="5">
    <location>
        <begin position="1"/>
        <end position="26"/>
    </location>
</feature>
<feature type="chain" id="PRO_0000023969" description="Phytase A">
    <location>
        <begin position="27"/>
        <end position="465"/>
    </location>
</feature>
<feature type="active site" description="Nucleophile" evidence="3 11">
    <location>
        <position position="81"/>
    </location>
</feature>
<feature type="binding site" evidence="10 12">
    <location>
        <position position="49"/>
    </location>
    <ligand>
        <name>1D-myo-inositol hexakisphosphate</name>
        <dbReference type="ChEBI" id="CHEBI:58130"/>
    </ligand>
</feature>
<feature type="binding site" evidence="10 12">
    <location>
        <position position="50"/>
    </location>
    <ligand>
        <name>1D-myo-inositol hexakisphosphate</name>
        <dbReference type="ChEBI" id="CHEBI:58130"/>
    </ligand>
</feature>
<feature type="binding site" evidence="10 12 13">
    <location>
        <position position="80"/>
    </location>
    <ligand>
        <name>1D-myo-inositol hexakisphosphate</name>
        <dbReference type="ChEBI" id="CHEBI:58130"/>
    </ligand>
</feature>
<feature type="binding site" evidence="2">
    <location>
        <position position="81"/>
    </location>
    <ligand>
        <name>1D-myo-inositol hexakisphosphate</name>
        <dbReference type="ChEBI" id="CHEBI:58130"/>
    </ligand>
</feature>
<feature type="binding site" evidence="10 12 13">
    <location>
        <position position="84"/>
    </location>
    <ligand>
        <name>1D-myo-inositol hexakisphosphate</name>
        <dbReference type="ChEBI" id="CHEBI:58130"/>
    </ligand>
</feature>
<feature type="binding site" evidence="2">
    <location>
        <position position="87"/>
    </location>
    <ligand>
        <name>1D-myo-inositol hexakisphosphate</name>
        <dbReference type="ChEBI" id="CHEBI:58130"/>
    </ligand>
</feature>
<feature type="binding site" evidence="10 12 13">
    <location>
        <position position="164"/>
    </location>
    <ligand>
        <name>1D-myo-inositol hexakisphosphate</name>
        <dbReference type="ChEBI" id="CHEBI:58130"/>
    </ligand>
</feature>
<feature type="binding site" evidence="2">
    <location>
        <position position="209"/>
    </location>
    <ligand>
        <name>1D-myo-inositol hexakisphosphate</name>
        <dbReference type="ChEBI" id="CHEBI:58130"/>
    </ligand>
</feature>
<feature type="binding site" evidence="10 12">
    <location>
        <position position="299"/>
    </location>
    <ligand>
        <name>1D-myo-inositol hexakisphosphate</name>
        <dbReference type="ChEBI" id="CHEBI:58130"/>
    </ligand>
</feature>
<feature type="binding site" evidence="10 12 13">
    <location>
        <position position="359"/>
    </location>
    <ligand>
        <name>1D-myo-inositol hexakisphosphate</name>
        <dbReference type="ChEBI" id="CHEBI:58130"/>
    </ligand>
</feature>
<feature type="binding site" evidence="10 12 13">
    <location>
        <position position="360"/>
    </location>
    <ligand>
        <name>1D-myo-inositol hexakisphosphate</name>
        <dbReference type="ChEBI" id="CHEBI:58130"/>
    </ligand>
</feature>
<feature type="glycosylation site" description="N-linked (GlcNAc...) asparagine" evidence="3 4 11 15">
    <location>
        <position position="104"/>
    </location>
</feature>
<feature type="glycosylation site" description="N-linked (GlcNAc...) asparagine" evidence="3 4 11 12 13 14 15">
    <location>
        <position position="205"/>
    </location>
</feature>
<feature type="glycosylation site" description="N-linked (GlcNAc...) asparagine" evidence="3 4 11 12 13 14 15">
    <location>
        <position position="228"/>
    </location>
</feature>
<feature type="glycosylation site" description="N-linked (GlcNAc...) asparagine" evidence="3 4 11 12 13 14 15">
    <location>
        <position position="337"/>
    </location>
</feature>
<feature type="glycosylation site" description="N-linked (GlcNAc...) asparagine" evidence="3 11">
    <location>
        <position position="350"/>
    </location>
</feature>
<feature type="glycosylation site" description="N-linked (GlcNAc...) asparagine" evidence="3 4 11 12 13 14 15">
    <location>
        <position position="374"/>
    </location>
</feature>
<feature type="disulfide bond" evidence="3 4 11 12 13 14 15">
    <location>
        <begin position="30"/>
        <end position="39"/>
    </location>
</feature>
<feature type="disulfide bond" evidence="3 4 11 12 13 14 15">
    <location>
        <begin position="70"/>
        <end position="412"/>
    </location>
</feature>
<feature type="disulfide bond" evidence="3 4 11 12 13 14 15">
    <location>
        <begin position="213"/>
        <end position="463"/>
    </location>
</feature>
<feature type="disulfide bond" evidence="3 4 11 12 13 14 15">
    <location>
        <begin position="262"/>
        <end position="280"/>
    </location>
</feature>
<feature type="disulfide bond" evidence="3 4 11 12 13 14 15">
    <location>
        <begin position="434"/>
        <end position="442"/>
    </location>
</feature>
<feature type="turn" evidence="16">
    <location>
        <begin position="33"/>
        <end position="35"/>
    </location>
</feature>
<feature type="helix" evidence="16">
    <location>
        <begin position="41"/>
        <end position="44"/>
    </location>
</feature>
<feature type="helix" evidence="16">
    <location>
        <begin position="48"/>
        <end position="50"/>
    </location>
</feature>
<feature type="turn" evidence="16">
    <location>
        <begin position="57"/>
        <end position="60"/>
    </location>
</feature>
<feature type="strand" evidence="16">
    <location>
        <begin position="70"/>
        <end position="80"/>
    </location>
</feature>
<feature type="helix" evidence="16">
    <location>
        <begin position="88"/>
        <end position="104"/>
    </location>
</feature>
<feature type="helix" evidence="16">
    <location>
        <begin position="110"/>
        <end position="116"/>
    </location>
</feature>
<feature type="strand" evidence="16">
    <location>
        <begin position="124"/>
        <end position="127"/>
    </location>
</feature>
<feature type="helix" evidence="16">
    <location>
        <begin position="129"/>
        <end position="145"/>
    </location>
</feature>
<feature type="helix" evidence="16">
    <location>
        <begin position="147"/>
        <end position="150"/>
    </location>
</feature>
<feature type="strand" evidence="16">
    <location>
        <begin position="156"/>
        <end position="161"/>
    </location>
</feature>
<feature type="helix" evidence="16">
    <location>
        <begin position="163"/>
        <end position="181"/>
    </location>
</feature>
<feature type="strand" evidence="16">
    <location>
        <begin position="194"/>
        <end position="198"/>
    </location>
</feature>
<feature type="strand" evidence="17">
    <location>
        <begin position="201"/>
        <end position="204"/>
    </location>
</feature>
<feature type="helix" evidence="16">
    <location>
        <begin position="214"/>
        <end position="217"/>
    </location>
</feature>
<feature type="helix" evidence="16">
    <location>
        <begin position="221"/>
        <end position="244"/>
    </location>
</feature>
<feature type="helix" evidence="16">
    <location>
        <begin position="252"/>
        <end position="269"/>
    </location>
</feature>
<feature type="helix" evidence="16">
    <location>
        <begin position="280"/>
        <end position="282"/>
    </location>
</feature>
<feature type="helix" evidence="16">
    <location>
        <begin position="285"/>
        <end position="302"/>
    </location>
</feature>
<feature type="turn" evidence="16">
    <location>
        <begin position="308"/>
        <end position="310"/>
    </location>
</feature>
<feature type="helix" evidence="16">
    <location>
        <begin position="311"/>
        <end position="314"/>
    </location>
</feature>
<feature type="helix" evidence="16">
    <location>
        <begin position="315"/>
        <end position="326"/>
    </location>
</feature>
<feature type="strand" evidence="16">
    <location>
        <begin position="333"/>
        <end position="335"/>
    </location>
</feature>
<feature type="helix" evidence="16">
    <location>
        <begin position="338"/>
        <end position="342"/>
    </location>
</feature>
<feature type="turn" evidence="16">
    <location>
        <begin position="344"/>
        <end position="346"/>
    </location>
</feature>
<feature type="strand" evidence="16">
    <location>
        <begin position="352"/>
        <end position="358"/>
    </location>
</feature>
<feature type="helix" evidence="16">
    <location>
        <begin position="360"/>
        <end position="369"/>
    </location>
</feature>
<feature type="turn" evidence="16">
    <location>
        <begin position="370"/>
        <end position="375"/>
    </location>
</feature>
<feature type="strand" evidence="16">
    <location>
        <begin position="381"/>
        <end position="383"/>
    </location>
</feature>
<feature type="helix" evidence="16">
    <location>
        <begin position="387"/>
        <end position="390"/>
    </location>
</feature>
<feature type="helix" evidence="16">
    <location>
        <begin position="395"/>
        <end position="398"/>
    </location>
</feature>
<feature type="strand" evidence="16">
    <location>
        <begin position="404"/>
        <end position="412"/>
    </location>
</feature>
<feature type="strand" evidence="16">
    <location>
        <begin position="419"/>
        <end position="424"/>
    </location>
</feature>
<feature type="strand" evidence="16">
    <location>
        <begin position="432"/>
        <end position="434"/>
    </location>
</feature>
<feature type="helix" evidence="16">
    <location>
        <begin position="444"/>
        <end position="450"/>
    </location>
</feature>
<feature type="helix" evidence="16">
    <location>
        <begin position="452"/>
        <end position="456"/>
    </location>
</feature>
<feature type="turn" evidence="16">
    <location>
        <begin position="457"/>
        <end position="459"/>
    </location>
</feature>
<feature type="helix" evidence="16">
    <location>
        <begin position="460"/>
        <end position="463"/>
    </location>
</feature>
<comment type="function">
    <text evidence="5 6">Catalyzes the phosphate monoester hydrolysis of phytic acid (myo-inositol hexakisphosphate), which results in the stepwise formation of myo-inositol pentakis-, tetrakis-, tris-, bis-, and monophosphates, as well as the liberation of inorganic phosphate (PubMed:9143104, PubMed:9925555). Myo-inositol 2-monophosphate is the end product (PubMed:9143104, PubMed:9925555). Has a broad substrate specificity and is also able to dephosphorylate other classic acid phosphatase substrates such as p-nitrophenyl phosphate, phenyl phosphate, fructose 1,6-bisphosphate, fructose 6-phosphate, glucose 6-phosphate, ribose 5-phosphate, alpha-glycerophosphate, beta-glycerophosphate, 3-phosphoglycerate, phosphoenolpyruvate, as well as ADP and ATP (PubMed:9143104, PubMed:9925555).</text>
</comment>
<comment type="catalytic activity">
    <reaction evidence="6">
        <text>1D-myo-inositol hexakisphosphate + H2O = 1D-myo-inositol 1,2,4,5,6-pentakisphosphate + phosphate</text>
        <dbReference type="Rhea" id="RHEA:16989"/>
        <dbReference type="ChEBI" id="CHEBI:15377"/>
        <dbReference type="ChEBI" id="CHEBI:43474"/>
        <dbReference type="ChEBI" id="CHEBI:57798"/>
        <dbReference type="ChEBI" id="CHEBI:58130"/>
        <dbReference type="EC" id="3.1.3.8"/>
    </reaction>
    <physiologicalReaction direction="left-to-right" evidence="5 6">
        <dbReference type="Rhea" id="RHEA:16990"/>
    </physiologicalReaction>
</comment>
<comment type="catalytic activity">
    <reaction evidence="6">
        <text>1D-myo-inositol 1,2,4,5,6-pentakisphosphate + H2O = 1D-myo-inositol 1,2,5,6-tetrakisphosphate + phosphate</text>
        <dbReference type="Rhea" id="RHEA:77115"/>
        <dbReference type="ChEBI" id="CHEBI:15377"/>
        <dbReference type="ChEBI" id="CHEBI:43474"/>
        <dbReference type="ChEBI" id="CHEBI:57798"/>
        <dbReference type="ChEBI" id="CHEBI:195535"/>
    </reaction>
    <physiologicalReaction direction="left-to-right" evidence="6">
        <dbReference type="Rhea" id="RHEA:77116"/>
    </physiologicalReaction>
</comment>
<comment type="catalytic activity">
    <reaction evidence="6">
        <text>1D-myo-inositol 1,2,5,6-tetrakisphosphate + H2O = 1D-myo-inositol 1,2,6-trisphosphate + phosphate</text>
        <dbReference type="Rhea" id="RHEA:77119"/>
        <dbReference type="ChEBI" id="CHEBI:15377"/>
        <dbReference type="ChEBI" id="CHEBI:43474"/>
        <dbReference type="ChEBI" id="CHEBI:195535"/>
        <dbReference type="ChEBI" id="CHEBI:195537"/>
    </reaction>
    <physiologicalReaction direction="left-to-right" evidence="6">
        <dbReference type="Rhea" id="RHEA:77120"/>
    </physiologicalReaction>
</comment>
<comment type="catalytic activity">
    <reaction evidence="6">
        <text>1D-myo-inositol 1,2,6-trisphosphate + H2O = 1D-myo-inositol 1,2-bisphosphate + phosphate</text>
        <dbReference type="Rhea" id="RHEA:77131"/>
        <dbReference type="ChEBI" id="CHEBI:15377"/>
        <dbReference type="ChEBI" id="CHEBI:43474"/>
        <dbReference type="ChEBI" id="CHEBI:195537"/>
        <dbReference type="ChEBI" id="CHEBI:195539"/>
    </reaction>
    <physiologicalReaction direction="left-to-right" evidence="6">
        <dbReference type="Rhea" id="RHEA:77132"/>
    </physiologicalReaction>
</comment>
<comment type="catalytic activity">
    <reaction evidence="6">
        <text>1D-myo-inositol 1,2-bisphosphate + H2O = 1D-myo-inositol 2-phosphate + phosphate</text>
        <dbReference type="Rhea" id="RHEA:77135"/>
        <dbReference type="ChEBI" id="CHEBI:15377"/>
        <dbReference type="ChEBI" id="CHEBI:43474"/>
        <dbReference type="ChEBI" id="CHEBI:84142"/>
        <dbReference type="ChEBI" id="CHEBI:195539"/>
    </reaction>
    <physiologicalReaction direction="left-to-right" evidence="6">
        <dbReference type="Rhea" id="RHEA:77136"/>
    </physiologicalReaction>
</comment>
<comment type="biophysicochemical properties">
    <phDependence>
        <text evidence="5 6">Highly active from pH 3 to 5 with 4-nitrophenyl phosphate as substrate, and from 2.5 to 7.5 with phytic acid.</text>
    </phDependence>
    <temperatureDependence>
        <text evidence="5">Able to withstand temperatures up to 100 degrees Celsius over a period of 20 minutes, with a loss of only 10% of the initial enzymatic activity.</text>
    </temperatureDependence>
</comment>
<comment type="subunit">
    <text evidence="1">Monomer.</text>
</comment>
<comment type="subcellular location">
    <subcellularLocation>
        <location evidence="9">Secreted</location>
    </subcellularLocation>
</comment>
<comment type="biotechnology">
    <text evidence="6">Phytic acid is the major storage form of phosphorus in plant seeds and, thus, in seed-based animal feed. Phytases are therefore of considerable economic interest.</text>
</comment>
<comment type="similarity">
    <text evidence="9">Belongs to the histidine acid phosphatase family.</text>
</comment>
<comment type="sequence caution" evidence="9">
    <conflict type="erroneous initiation">
        <sequence resource="EMBL-CDS" id="EAL89926"/>
    </conflict>
    <text>Extended N-terminus.</text>
</comment>
<protein>
    <recommendedName>
        <fullName evidence="7">Phytase A</fullName>
        <ecNumber evidence="6">3.1.3.-</ecNumber>
        <ecNumber evidence="6">3.1.3.8</ecNumber>
    </recommendedName>
    <alternativeName>
        <fullName evidence="8">Histidine acid phosphatase phyA</fullName>
        <shortName evidence="8">HAP</shortName>
    </alternativeName>
    <alternativeName>
        <fullName evidence="8">Myo-inositol hexakisphosphate phosphohydrolase A</fullName>
    </alternativeName>
    <alternativeName>
        <fullName evidence="8">Myo-inositol-hexaphosphate 3-phosphohydrolase A</fullName>
    </alternativeName>
</protein>
<evidence type="ECO:0000250" key="1">
    <source>
        <dbReference type="UniProtKB" id="O00085"/>
    </source>
</evidence>
<evidence type="ECO:0000250" key="2">
    <source>
        <dbReference type="UniProtKB" id="P34752"/>
    </source>
</evidence>
<evidence type="ECO:0000269" key="3">
    <source>
    </source>
</evidence>
<evidence type="ECO:0000269" key="4">
    <source>
    </source>
</evidence>
<evidence type="ECO:0000269" key="5">
    <source>
    </source>
</evidence>
<evidence type="ECO:0000269" key="6">
    <source>
    </source>
</evidence>
<evidence type="ECO:0000303" key="7">
    <source>
    </source>
</evidence>
<evidence type="ECO:0000303" key="8">
    <source>
    </source>
</evidence>
<evidence type="ECO:0000305" key="9"/>
<evidence type="ECO:0000305" key="10">
    <source>
    </source>
</evidence>
<evidence type="ECO:0007744" key="11">
    <source>
        <dbReference type="PDB" id="1QWO"/>
    </source>
</evidence>
<evidence type="ECO:0007744" key="12">
    <source>
        <dbReference type="PDB" id="1SK8"/>
    </source>
</evidence>
<evidence type="ECO:0007744" key="13">
    <source>
        <dbReference type="PDB" id="1SK9"/>
    </source>
</evidence>
<evidence type="ECO:0007744" key="14">
    <source>
        <dbReference type="PDB" id="1SKA"/>
    </source>
</evidence>
<evidence type="ECO:0007744" key="15">
    <source>
        <dbReference type="PDB" id="1SKB"/>
    </source>
</evidence>
<evidence type="ECO:0007829" key="16">
    <source>
        <dbReference type="PDB" id="1QWO"/>
    </source>
</evidence>
<evidence type="ECO:0007829" key="17">
    <source>
        <dbReference type="PDB" id="1SK8"/>
    </source>
</evidence>
<organism>
    <name type="scientific">Aspergillus fumigatus (strain ATCC MYA-4609 / CBS 101355 / FGSC A1100 / Af293)</name>
    <name type="common">Neosartorya fumigata</name>
    <dbReference type="NCBI Taxonomy" id="330879"/>
    <lineage>
        <taxon>Eukaryota</taxon>
        <taxon>Fungi</taxon>
        <taxon>Dikarya</taxon>
        <taxon>Ascomycota</taxon>
        <taxon>Pezizomycotina</taxon>
        <taxon>Eurotiomycetes</taxon>
        <taxon>Eurotiomycetidae</taxon>
        <taxon>Eurotiales</taxon>
        <taxon>Aspergillaceae</taxon>
        <taxon>Aspergillus</taxon>
        <taxon>Aspergillus subgen. Fumigati</taxon>
    </lineage>
</organism>
<keyword id="KW-0002">3D-structure</keyword>
<keyword id="KW-0903">Direct protein sequencing</keyword>
<keyword id="KW-1015">Disulfide bond</keyword>
<keyword id="KW-0325">Glycoprotein</keyword>
<keyword id="KW-0378">Hydrolase</keyword>
<keyword id="KW-1185">Reference proteome</keyword>
<keyword id="KW-0964">Secreted</keyword>
<keyword id="KW-0732">Signal</keyword>
<accession>O00092</accession>
<accession>Q4WPA8</accession>
<accession>Q8WZJ5</accession>
<name>PHYA_ASPFU</name>